<name>PNP_CAUSK</name>
<gene>
    <name evidence="1" type="primary">pnp</name>
    <name type="ordered locus">Caul_0041</name>
</gene>
<proteinExistence type="inferred from homology"/>
<evidence type="ECO:0000255" key="1">
    <source>
        <dbReference type="HAMAP-Rule" id="MF_01595"/>
    </source>
</evidence>
<evidence type="ECO:0000256" key="2">
    <source>
        <dbReference type="SAM" id="MobiDB-lite"/>
    </source>
</evidence>
<sequence>MFEIMRKTIEWGGKTLVLETGRIARQADGAVLATMGETVVLATAVFAKKAKPGQDFFPLTVNYIEKTYAAGKIPGGFFKREGRPSEKETLVSRLIDRPIRPLFVKGFKNEVQVVCTVLQHDLENDPDIVAMCAASAALVISGAPFMGPIGGCRVGYVNDEYILNPTLDELKESKMDLVVAGTADAVMMVESEIQELSEEIVLGGVSFAHKSMQAVINGIIELAEHAAKEPFDFQPEDTDALKAEVKKAVGADLADAYTIRAKGDRHAALSAAKSKAVDTFAKSDANPAGIDPLKLISVFKELEADIVRRSILDTGIRIDGRTVDTVRPILGEVGILPRTHGSALFTRGETQAIVVATLGTGDDEQFIDALEGTYKEAFLLHYNFPPFSVGETGRMGSPGRREIGHGKLAWRALRPMLPAKEDFPYTIRLVSEITESNGSSSMATVCGASLAMMDAGVPLIRPVSGIAMGLILEKDGFAVLSDILGDEDHLGDMDFKVAGTSQGLTSLQMDIKIAGITEEIMKQALAQAKGGREHILGEMNKAMDAPREEVGDYAPKIETITIPTDKIREVIGTGGKVIREIVATTGAKVDINDEGTVKVSASDGAKIKAAIDWIKSITQEAEVGAIYDGKVVKVVDFGAFVNFFGAKDGLVHVSQISNERVAKPSDVLKEGQIVKVKLLGFDDRGKTKLSMKVVDQETGEDLSKKEAVSPEEAVNT</sequence>
<organism>
    <name type="scientific">Caulobacter sp. (strain K31)</name>
    <dbReference type="NCBI Taxonomy" id="366602"/>
    <lineage>
        <taxon>Bacteria</taxon>
        <taxon>Pseudomonadati</taxon>
        <taxon>Pseudomonadota</taxon>
        <taxon>Alphaproteobacteria</taxon>
        <taxon>Caulobacterales</taxon>
        <taxon>Caulobacteraceae</taxon>
        <taxon>Caulobacter</taxon>
    </lineage>
</organism>
<feature type="chain" id="PRO_1000087986" description="Polyribonucleotide nucleotidyltransferase">
    <location>
        <begin position="1"/>
        <end position="716"/>
    </location>
</feature>
<feature type="domain" description="KH" evidence="1">
    <location>
        <begin position="555"/>
        <end position="614"/>
    </location>
</feature>
<feature type="domain" description="S1 motif" evidence="1">
    <location>
        <begin position="624"/>
        <end position="692"/>
    </location>
</feature>
<feature type="region of interest" description="Disordered" evidence="2">
    <location>
        <begin position="695"/>
        <end position="716"/>
    </location>
</feature>
<feature type="binding site" evidence="1">
    <location>
        <position position="488"/>
    </location>
    <ligand>
        <name>Mg(2+)</name>
        <dbReference type="ChEBI" id="CHEBI:18420"/>
    </ligand>
</feature>
<feature type="binding site" evidence="1">
    <location>
        <position position="494"/>
    </location>
    <ligand>
        <name>Mg(2+)</name>
        <dbReference type="ChEBI" id="CHEBI:18420"/>
    </ligand>
</feature>
<reference key="1">
    <citation type="submission" date="2008-01" db="EMBL/GenBank/DDBJ databases">
        <title>Complete sequence of chromosome of Caulobacter sp. K31.</title>
        <authorList>
            <consortium name="US DOE Joint Genome Institute"/>
            <person name="Copeland A."/>
            <person name="Lucas S."/>
            <person name="Lapidus A."/>
            <person name="Barry K."/>
            <person name="Glavina del Rio T."/>
            <person name="Dalin E."/>
            <person name="Tice H."/>
            <person name="Pitluck S."/>
            <person name="Bruce D."/>
            <person name="Goodwin L."/>
            <person name="Thompson L.S."/>
            <person name="Brettin T."/>
            <person name="Detter J.C."/>
            <person name="Han C."/>
            <person name="Schmutz J."/>
            <person name="Larimer F."/>
            <person name="Land M."/>
            <person name="Hauser L."/>
            <person name="Kyrpides N."/>
            <person name="Kim E."/>
            <person name="Stephens C."/>
            <person name="Richardson P."/>
        </authorList>
    </citation>
    <scope>NUCLEOTIDE SEQUENCE [LARGE SCALE GENOMIC DNA]</scope>
    <source>
        <strain>K31</strain>
    </source>
</reference>
<accession>B0T175</accession>
<comment type="function">
    <text evidence="1">Involved in mRNA degradation. Catalyzes the phosphorolysis of single-stranded polyribonucleotides processively in the 3'- to 5'-direction.</text>
</comment>
<comment type="catalytic activity">
    <reaction evidence="1">
        <text>RNA(n+1) + phosphate = RNA(n) + a ribonucleoside 5'-diphosphate</text>
        <dbReference type="Rhea" id="RHEA:22096"/>
        <dbReference type="Rhea" id="RHEA-COMP:14527"/>
        <dbReference type="Rhea" id="RHEA-COMP:17342"/>
        <dbReference type="ChEBI" id="CHEBI:43474"/>
        <dbReference type="ChEBI" id="CHEBI:57930"/>
        <dbReference type="ChEBI" id="CHEBI:140395"/>
        <dbReference type="EC" id="2.7.7.8"/>
    </reaction>
</comment>
<comment type="cofactor">
    <cofactor evidence="1">
        <name>Mg(2+)</name>
        <dbReference type="ChEBI" id="CHEBI:18420"/>
    </cofactor>
</comment>
<comment type="subcellular location">
    <subcellularLocation>
        <location evidence="1">Cytoplasm</location>
    </subcellularLocation>
</comment>
<comment type="similarity">
    <text evidence="1">Belongs to the polyribonucleotide nucleotidyltransferase family.</text>
</comment>
<protein>
    <recommendedName>
        <fullName evidence="1">Polyribonucleotide nucleotidyltransferase</fullName>
        <ecNumber evidence="1">2.7.7.8</ecNumber>
    </recommendedName>
    <alternativeName>
        <fullName evidence="1">Polynucleotide phosphorylase</fullName>
        <shortName evidence="1">PNPase</shortName>
    </alternativeName>
</protein>
<keyword id="KW-0963">Cytoplasm</keyword>
<keyword id="KW-0460">Magnesium</keyword>
<keyword id="KW-0479">Metal-binding</keyword>
<keyword id="KW-0548">Nucleotidyltransferase</keyword>
<keyword id="KW-0694">RNA-binding</keyword>
<keyword id="KW-0808">Transferase</keyword>
<dbReference type="EC" id="2.7.7.8" evidence="1"/>
<dbReference type="EMBL" id="CP000927">
    <property type="protein sequence ID" value="ABZ69179.1"/>
    <property type="molecule type" value="Genomic_DNA"/>
</dbReference>
<dbReference type="SMR" id="B0T175"/>
<dbReference type="STRING" id="366602.Caul_0041"/>
<dbReference type="KEGG" id="cak:Caul_0041"/>
<dbReference type="eggNOG" id="COG1185">
    <property type="taxonomic scope" value="Bacteria"/>
</dbReference>
<dbReference type="HOGENOM" id="CLU_004217_2_2_5"/>
<dbReference type="OrthoDB" id="9804305at2"/>
<dbReference type="GO" id="GO:0005829">
    <property type="term" value="C:cytosol"/>
    <property type="evidence" value="ECO:0007669"/>
    <property type="project" value="TreeGrafter"/>
</dbReference>
<dbReference type="GO" id="GO:0000175">
    <property type="term" value="F:3'-5'-RNA exonuclease activity"/>
    <property type="evidence" value="ECO:0007669"/>
    <property type="project" value="TreeGrafter"/>
</dbReference>
<dbReference type="GO" id="GO:0000287">
    <property type="term" value="F:magnesium ion binding"/>
    <property type="evidence" value="ECO:0007669"/>
    <property type="project" value="UniProtKB-UniRule"/>
</dbReference>
<dbReference type="GO" id="GO:0004654">
    <property type="term" value="F:polyribonucleotide nucleotidyltransferase activity"/>
    <property type="evidence" value="ECO:0007669"/>
    <property type="project" value="UniProtKB-UniRule"/>
</dbReference>
<dbReference type="GO" id="GO:0003723">
    <property type="term" value="F:RNA binding"/>
    <property type="evidence" value="ECO:0007669"/>
    <property type="project" value="UniProtKB-UniRule"/>
</dbReference>
<dbReference type="GO" id="GO:0006402">
    <property type="term" value="P:mRNA catabolic process"/>
    <property type="evidence" value="ECO:0007669"/>
    <property type="project" value="UniProtKB-UniRule"/>
</dbReference>
<dbReference type="GO" id="GO:0006396">
    <property type="term" value="P:RNA processing"/>
    <property type="evidence" value="ECO:0007669"/>
    <property type="project" value="InterPro"/>
</dbReference>
<dbReference type="CDD" id="cd02393">
    <property type="entry name" value="KH-I_PNPase"/>
    <property type="match status" value="1"/>
</dbReference>
<dbReference type="CDD" id="cd11363">
    <property type="entry name" value="RNase_PH_PNPase_1"/>
    <property type="match status" value="1"/>
</dbReference>
<dbReference type="CDD" id="cd11364">
    <property type="entry name" value="RNase_PH_PNPase_2"/>
    <property type="match status" value="1"/>
</dbReference>
<dbReference type="CDD" id="cd04472">
    <property type="entry name" value="S1_PNPase"/>
    <property type="match status" value="1"/>
</dbReference>
<dbReference type="FunFam" id="2.40.50.140:FF:000107">
    <property type="entry name" value="Polyribonucleotide nucleotidyltransferase"/>
    <property type="match status" value="1"/>
</dbReference>
<dbReference type="FunFam" id="3.30.1370.10:FF:000001">
    <property type="entry name" value="Polyribonucleotide nucleotidyltransferase"/>
    <property type="match status" value="1"/>
</dbReference>
<dbReference type="FunFam" id="3.30.230.70:FF:000001">
    <property type="entry name" value="Polyribonucleotide nucleotidyltransferase"/>
    <property type="match status" value="1"/>
</dbReference>
<dbReference type="FunFam" id="3.30.230.70:FF:000002">
    <property type="entry name" value="Polyribonucleotide nucleotidyltransferase"/>
    <property type="match status" value="1"/>
</dbReference>
<dbReference type="Gene3D" id="3.30.230.70">
    <property type="entry name" value="GHMP Kinase, N-terminal domain"/>
    <property type="match status" value="2"/>
</dbReference>
<dbReference type="Gene3D" id="3.30.1370.10">
    <property type="entry name" value="K Homology domain, type 1"/>
    <property type="match status" value="1"/>
</dbReference>
<dbReference type="Gene3D" id="2.40.50.140">
    <property type="entry name" value="Nucleic acid-binding proteins"/>
    <property type="match status" value="1"/>
</dbReference>
<dbReference type="HAMAP" id="MF_01595">
    <property type="entry name" value="PNPase"/>
    <property type="match status" value="1"/>
</dbReference>
<dbReference type="InterPro" id="IPR001247">
    <property type="entry name" value="ExoRNase_PH_dom1"/>
</dbReference>
<dbReference type="InterPro" id="IPR015847">
    <property type="entry name" value="ExoRNase_PH_dom2"/>
</dbReference>
<dbReference type="InterPro" id="IPR036345">
    <property type="entry name" value="ExoRNase_PH_dom2_sf"/>
</dbReference>
<dbReference type="InterPro" id="IPR004087">
    <property type="entry name" value="KH_dom"/>
</dbReference>
<dbReference type="InterPro" id="IPR004088">
    <property type="entry name" value="KH_dom_type_1"/>
</dbReference>
<dbReference type="InterPro" id="IPR036612">
    <property type="entry name" value="KH_dom_type_1_sf"/>
</dbReference>
<dbReference type="InterPro" id="IPR012340">
    <property type="entry name" value="NA-bd_OB-fold"/>
</dbReference>
<dbReference type="InterPro" id="IPR012162">
    <property type="entry name" value="PNPase"/>
</dbReference>
<dbReference type="InterPro" id="IPR027408">
    <property type="entry name" value="PNPase/RNase_PH_dom_sf"/>
</dbReference>
<dbReference type="InterPro" id="IPR015848">
    <property type="entry name" value="PNPase_PH_RNA-bd_bac/org-type"/>
</dbReference>
<dbReference type="InterPro" id="IPR036456">
    <property type="entry name" value="PNPase_PH_RNA-bd_sf"/>
</dbReference>
<dbReference type="InterPro" id="IPR020568">
    <property type="entry name" value="Ribosomal_Su5_D2-typ_SF"/>
</dbReference>
<dbReference type="InterPro" id="IPR003029">
    <property type="entry name" value="S1_domain"/>
</dbReference>
<dbReference type="NCBIfam" id="TIGR03591">
    <property type="entry name" value="polynuc_phos"/>
    <property type="match status" value="1"/>
</dbReference>
<dbReference type="NCBIfam" id="NF008805">
    <property type="entry name" value="PRK11824.1"/>
    <property type="match status" value="1"/>
</dbReference>
<dbReference type="PANTHER" id="PTHR11252">
    <property type="entry name" value="POLYRIBONUCLEOTIDE NUCLEOTIDYLTRANSFERASE"/>
    <property type="match status" value="1"/>
</dbReference>
<dbReference type="PANTHER" id="PTHR11252:SF0">
    <property type="entry name" value="POLYRIBONUCLEOTIDE NUCLEOTIDYLTRANSFERASE 1, MITOCHONDRIAL"/>
    <property type="match status" value="1"/>
</dbReference>
<dbReference type="Pfam" id="PF00013">
    <property type="entry name" value="KH_1"/>
    <property type="match status" value="1"/>
</dbReference>
<dbReference type="Pfam" id="PF03726">
    <property type="entry name" value="PNPase"/>
    <property type="match status" value="1"/>
</dbReference>
<dbReference type="Pfam" id="PF01138">
    <property type="entry name" value="RNase_PH"/>
    <property type="match status" value="2"/>
</dbReference>
<dbReference type="Pfam" id="PF03725">
    <property type="entry name" value="RNase_PH_C"/>
    <property type="match status" value="2"/>
</dbReference>
<dbReference type="Pfam" id="PF00575">
    <property type="entry name" value="S1"/>
    <property type="match status" value="1"/>
</dbReference>
<dbReference type="PIRSF" id="PIRSF005499">
    <property type="entry name" value="PNPase"/>
    <property type="match status" value="1"/>
</dbReference>
<dbReference type="SMART" id="SM00322">
    <property type="entry name" value="KH"/>
    <property type="match status" value="1"/>
</dbReference>
<dbReference type="SMART" id="SM00316">
    <property type="entry name" value="S1"/>
    <property type="match status" value="1"/>
</dbReference>
<dbReference type="SUPFAM" id="SSF54791">
    <property type="entry name" value="Eukaryotic type KH-domain (KH-domain type I)"/>
    <property type="match status" value="1"/>
</dbReference>
<dbReference type="SUPFAM" id="SSF50249">
    <property type="entry name" value="Nucleic acid-binding proteins"/>
    <property type="match status" value="1"/>
</dbReference>
<dbReference type="SUPFAM" id="SSF46915">
    <property type="entry name" value="Polynucleotide phosphorylase/guanosine pentaphosphate synthase (PNPase/GPSI), domain 3"/>
    <property type="match status" value="1"/>
</dbReference>
<dbReference type="SUPFAM" id="SSF55666">
    <property type="entry name" value="Ribonuclease PH domain 2-like"/>
    <property type="match status" value="2"/>
</dbReference>
<dbReference type="SUPFAM" id="SSF54211">
    <property type="entry name" value="Ribosomal protein S5 domain 2-like"/>
    <property type="match status" value="2"/>
</dbReference>
<dbReference type="PROSITE" id="PS50084">
    <property type="entry name" value="KH_TYPE_1"/>
    <property type="match status" value="1"/>
</dbReference>
<dbReference type="PROSITE" id="PS50126">
    <property type="entry name" value="S1"/>
    <property type="match status" value="1"/>
</dbReference>